<protein>
    <recommendedName>
        <fullName evidence="1">Endoribonuclease SymE</fullName>
        <ecNumber evidence="1">3.1.-.-</ecNumber>
    </recommendedName>
</protein>
<accession>Q1R2G2</accession>
<feature type="chain" id="PRO_0000297822" description="Endoribonuclease SymE">
    <location>
        <begin position="1"/>
        <end position="113"/>
    </location>
</feature>
<feature type="domain" description="SpoVT-AbrB" evidence="2">
    <location>
        <begin position="29"/>
        <end position="74"/>
    </location>
</feature>
<proteinExistence type="inferred from homology"/>
<organism>
    <name type="scientific">Escherichia coli (strain UTI89 / UPEC)</name>
    <dbReference type="NCBI Taxonomy" id="364106"/>
    <lineage>
        <taxon>Bacteria</taxon>
        <taxon>Pseudomonadati</taxon>
        <taxon>Pseudomonadota</taxon>
        <taxon>Gammaproteobacteria</taxon>
        <taxon>Enterobacterales</taxon>
        <taxon>Enterobacteriaceae</taxon>
        <taxon>Escherichia</taxon>
    </lineage>
</organism>
<sequence>MTDTHSIAQPFEAEVSPANNRQLTVSYASRYPDYSRIPAITLKGQWLEAAGFATGTAIDVKVMEGCIVLTAQPPAAEESELMQSLRQVCKLSARKQRQVQEFIGVIAGKQKVA</sequence>
<keyword id="KW-0963">Cytoplasm</keyword>
<keyword id="KW-0238">DNA-binding</keyword>
<keyword id="KW-0255">Endonuclease</keyword>
<keyword id="KW-0378">Hydrolase</keyword>
<keyword id="KW-0540">Nuclease</keyword>
<keyword id="KW-0694">RNA-binding</keyword>
<gene>
    <name evidence="1" type="primary">symE</name>
    <name type="ordered locus">UTI89_C5049</name>
</gene>
<reference key="1">
    <citation type="journal article" date="2006" name="Proc. Natl. Acad. Sci. U.S.A.">
        <title>Identification of genes subject to positive selection in uropathogenic strains of Escherichia coli: a comparative genomics approach.</title>
        <authorList>
            <person name="Chen S.L."/>
            <person name="Hung C.-S."/>
            <person name="Xu J."/>
            <person name="Reigstad C.S."/>
            <person name="Magrini V."/>
            <person name="Sabo A."/>
            <person name="Blasiar D."/>
            <person name="Bieri T."/>
            <person name="Meyer R.R."/>
            <person name="Ozersky P."/>
            <person name="Armstrong J.R."/>
            <person name="Fulton R.S."/>
            <person name="Latreille J.P."/>
            <person name="Spieth J."/>
            <person name="Hooton T.M."/>
            <person name="Mardis E.R."/>
            <person name="Hultgren S.J."/>
            <person name="Gordon J.I."/>
        </authorList>
    </citation>
    <scope>NUCLEOTIDE SEQUENCE [LARGE SCALE GENOMIC DNA]</scope>
    <source>
        <strain>UTI89 / UPEC</strain>
    </source>
</reference>
<comment type="function">
    <text evidence="1">Involved in the degradation and recycling of damaged RNA. It is itself a target for degradation by the ATP-dependent protease Lon.</text>
</comment>
<comment type="subcellular location">
    <subcellularLocation>
        <location evidence="1">Cytoplasm</location>
    </subcellularLocation>
</comment>
<comment type="similarity">
    <text evidence="1">Belongs to the SymE family.</text>
</comment>
<evidence type="ECO:0000255" key="1">
    <source>
        <dbReference type="HAMAP-Rule" id="MF_01193"/>
    </source>
</evidence>
<evidence type="ECO:0000255" key="2">
    <source>
        <dbReference type="PROSITE-ProRule" id="PRU01076"/>
    </source>
</evidence>
<dbReference type="EC" id="3.1.-.-" evidence="1"/>
<dbReference type="EMBL" id="CP000243">
    <property type="protein sequence ID" value="ABE10452.1"/>
    <property type="molecule type" value="Genomic_DNA"/>
</dbReference>
<dbReference type="RefSeq" id="WP_000132612.1">
    <property type="nucleotide sequence ID" value="NZ_CP064825.1"/>
</dbReference>
<dbReference type="KEGG" id="eci:UTI89_C5049"/>
<dbReference type="HOGENOM" id="CLU_151239_0_0_6"/>
<dbReference type="Proteomes" id="UP000001952">
    <property type="component" value="Chromosome"/>
</dbReference>
<dbReference type="GO" id="GO:0005737">
    <property type="term" value="C:cytoplasm"/>
    <property type="evidence" value="ECO:0007669"/>
    <property type="project" value="UniProtKB-SubCell"/>
</dbReference>
<dbReference type="GO" id="GO:0003677">
    <property type="term" value="F:DNA binding"/>
    <property type="evidence" value="ECO:0007669"/>
    <property type="project" value="UniProtKB-KW"/>
</dbReference>
<dbReference type="GO" id="GO:0003723">
    <property type="term" value="F:RNA binding"/>
    <property type="evidence" value="ECO:0007669"/>
    <property type="project" value="UniProtKB-KW"/>
</dbReference>
<dbReference type="GO" id="GO:0004521">
    <property type="term" value="F:RNA endonuclease activity"/>
    <property type="evidence" value="ECO:0007669"/>
    <property type="project" value="UniProtKB-UniRule"/>
</dbReference>
<dbReference type="GO" id="GO:0016070">
    <property type="term" value="P:RNA metabolic process"/>
    <property type="evidence" value="ECO:0007669"/>
    <property type="project" value="InterPro"/>
</dbReference>
<dbReference type="HAMAP" id="MF_01193">
    <property type="entry name" value="Endoribonucl_SymE"/>
    <property type="match status" value="1"/>
</dbReference>
<dbReference type="InterPro" id="IPR007159">
    <property type="entry name" value="SpoVT-AbrB_dom"/>
</dbReference>
<dbReference type="InterPro" id="IPR014944">
    <property type="entry name" value="Toxin_SymE-like"/>
</dbReference>
<dbReference type="InterPro" id="IPR020883">
    <property type="entry name" value="TypeI_TA_SymE"/>
</dbReference>
<dbReference type="NCBIfam" id="NF010128">
    <property type="entry name" value="PRK13605.1"/>
    <property type="match status" value="1"/>
</dbReference>
<dbReference type="Pfam" id="PF08845">
    <property type="entry name" value="SymE_toxin"/>
    <property type="match status" value="1"/>
</dbReference>
<dbReference type="PROSITE" id="PS51740">
    <property type="entry name" value="SPOVT_ABRB"/>
    <property type="match status" value="1"/>
</dbReference>
<name>SYME_ECOUT</name>